<evidence type="ECO:0000255" key="1">
    <source>
        <dbReference type="HAMAP-Rule" id="MF_00662"/>
    </source>
</evidence>
<proteinExistence type="inferred from homology"/>
<reference key="1">
    <citation type="submission" date="2008-01" db="EMBL/GenBank/DDBJ databases">
        <title>Complete sequence of Shewanella halifaxensis HAW-EB4.</title>
        <authorList>
            <consortium name="US DOE Joint Genome Institute"/>
            <person name="Copeland A."/>
            <person name="Lucas S."/>
            <person name="Lapidus A."/>
            <person name="Glavina del Rio T."/>
            <person name="Dalin E."/>
            <person name="Tice H."/>
            <person name="Bruce D."/>
            <person name="Goodwin L."/>
            <person name="Pitluck S."/>
            <person name="Sims D."/>
            <person name="Brettin T."/>
            <person name="Detter J.C."/>
            <person name="Han C."/>
            <person name="Kuske C.R."/>
            <person name="Schmutz J."/>
            <person name="Larimer F."/>
            <person name="Land M."/>
            <person name="Hauser L."/>
            <person name="Kyrpides N."/>
            <person name="Kim E."/>
            <person name="Zhao J.-S."/>
            <person name="Richardson P."/>
        </authorList>
    </citation>
    <scope>NUCLEOTIDE SEQUENCE [LARGE SCALE GENOMIC DNA]</scope>
    <source>
        <strain>HAW-EB4</strain>
    </source>
</reference>
<accession>B0TU73</accession>
<dbReference type="EC" id="4.1.1.65" evidence="1"/>
<dbReference type="EMBL" id="CP000931">
    <property type="protein sequence ID" value="ABZ78184.1"/>
    <property type="molecule type" value="Genomic_DNA"/>
</dbReference>
<dbReference type="RefSeq" id="WP_012278703.1">
    <property type="nucleotide sequence ID" value="NC_010334.1"/>
</dbReference>
<dbReference type="SMR" id="B0TU73"/>
<dbReference type="STRING" id="458817.Shal_3643"/>
<dbReference type="KEGG" id="shl:Shal_3643"/>
<dbReference type="eggNOG" id="COG0688">
    <property type="taxonomic scope" value="Bacteria"/>
</dbReference>
<dbReference type="HOGENOM" id="CLU_029061_4_1_6"/>
<dbReference type="OrthoDB" id="9802030at2"/>
<dbReference type="UniPathway" id="UPA00558">
    <property type="reaction ID" value="UER00616"/>
</dbReference>
<dbReference type="Proteomes" id="UP000001317">
    <property type="component" value="Chromosome"/>
</dbReference>
<dbReference type="GO" id="GO:0005886">
    <property type="term" value="C:plasma membrane"/>
    <property type="evidence" value="ECO:0007669"/>
    <property type="project" value="UniProtKB-SubCell"/>
</dbReference>
<dbReference type="GO" id="GO:0004609">
    <property type="term" value="F:phosphatidylserine decarboxylase activity"/>
    <property type="evidence" value="ECO:0007669"/>
    <property type="project" value="UniProtKB-UniRule"/>
</dbReference>
<dbReference type="GO" id="GO:0006646">
    <property type="term" value="P:phosphatidylethanolamine biosynthetic process"/>
    <property type="evidence" value="ECO:0007669"/>
    <property type="project" value="UniProtKB-UniRule"/>
</dbReference>
<dbReference type="HAMAP" id="MF_00662">
    <property type="entry name" value="PS_decarb_PSD_B_type1"/>
    <property type="match status" value="1"/>
</dbReference>
<dbReference type="InterPro" id="IPR003817">
    <property type="entry name" value="PS_Dcarbxylase"/>
</dbReference>
<dbReference type="InterPro" id="IPR033177">
    <property type="entry name" value="PSD-B"/>
</dbReference>
<dbReference type="InterPro" id="IPR033178">
    <property type="entry name" value="PSD_type1_pro"/>
</dbReference>
<dbReference type="NCBIfam" id="TIGR00163">
    <property type="entry name" value="PS_decarb"/>
    <property type="match status" value="1"/>
</dbReference>
<dbReference type="PANTHER" id="PTHR10067">
    <property type="entry name" value="PHOSPHATIDYLSERINE DECARBOXYLASE"/>
    <property type="match status" value="1"/>
</dbReference>
<dbReference type="PANTHER" id="PTHR10067:SF6">
    <property type="entry name" value="PHOSPHATIDYLSERINE DECARBOXYLASE PROENZYME, MITOCHONDRIAL"/>
    <property type="match status" value="1"/>
</dbReference>
<dbReference type="Pfam" id="PF02666">
    <property type="entry name" value="PS_Dcarbxylase"/>
    <property type="match status" value="1"/>
</dbReference>
<keyword id="KW-1003">Cell membrane</keyword>
<keyword id="KW-0210">Decarboxylase</keyword>
<keyword id="KW-0444">Lipid biosynthesis</keyword>
<keyword id="KW-0443">Lipid metabolism</keyword>
<keyword id="KW-0456">Lyase</keyword>
<keyword id="KW-0472">Membrane</keyword>
<keyword id="KW-0594">Phospholipid biosynthesis</keyword>
<keyword id="KW-1208">Phospholipid metabolism</keyword>
<keyword id="KW-0670">Pyruvate</keyword>
<keyword id="KW-0865">Zymogen</keyword>
<feature type="chain" id="PRO_1000082904" description="Phosphatidylserine decarboxylase beta chain" evidence="1">
    <location>
        <begin position="1"/>
        <end position="251"/>
    </location>
</feature>
<feature type="chain" id="PRO_1000082905" description="Phosphatidylserine decarboxylase alpha chain" evidence="1">
    <location>
        <begin position="252"/>
        <end position="287"/>
    </location>
</feature>
<feature type="active site" description="Charge relay system; for autoendoproteolytic cleavage activity" evidence="1">
    <location>
        <position position="89"/>
    </location>
</feature>
<feature type="active site" description="Charge relay system; for autoendoproteolytic cleavage activity" evidence="1">
    <location>
        <position position="146"/>
    </location>
</feature>
<feature type="active site" description="Charge relay system; for autoendoproteolytic cleavage activity" evidence="1">
    <location>
        <position position="252"/>
    </location>
</feature>
<feature type="active site" description="Schiff-base intermediate with substrate; via pyruvic acid; for decarboxylase activity" evidence="1">
    <location>
        <position position="252"/>
    </location>
</feature>
<feature type="site" description="Cleavage (non-hydrolytic); by autocatalysis" evidence="1">
    <location>
        <begin position="251"/>
        <end position="252"/>
    </location>
</feature>
<feature type="modified residue" description="Pyruvic acid (Ser); by autocatalysis" evidence="1">
    <location>
        <position position="252"/>
    </location>
</feature>
<organism>
    <name type="scientific">Shewanella halifaxensis (strain HAW-EB4)</name>
    <dbReference type="NCBI Taxonomy" id="458817"/>
    <lineage>
        <taxon>Bacteria</taxon>
        <taxon>Pseudomonadati</taxon>
        <taxon>Pseudomonadota</taxon>
        <taxon>Gammaproteobacteria</taxon>
        <taxon>Alteromonadales</taxon>
        <taxon>Shewanellaceae</taxon>
        <taxon>Shewanella</taxon>
    </lineage>
</organism>
<comment type="function">
    <text evidence="1">Catalyzes the formation of phosphatidylethanolamine (PtdEtn) from phosphatidylserine (PtdSer).</text>
</comment>
<comment type="catalytic activity">
    <reaction evidence="1">
        <text>a 1,2-diacyl-sn-glycero-3-phospho-L-serine + H(+) = a 1,2-diacyl-sn-glycero-3-phosphoethanolamine + CO2</text>
        <dbReference type="Rhea" id="RHEA:20828"/>
        <dbReference type="ChEBI" id="CHEBI:15378"/>
        <dbReference type="ChEBI" id="CHEBI:16526"/>
        <dbReference type="ChEBI" id="CHEBI:57262"/>
        <dbReference type="ChEBI" id="CHEBI:64612"/>
        <dbReference type="EC" id="4.1.1.65"/>
    </reaction>
</comment>
<comment type="cofactor">
    <cofactor evidence="1">
        <name>pyruvate</name>
        <dbReference type="ChEBI" id="CHEBI:15361"/>
    </cofactor>
    <text evidence="1">Binds 1 pyruvoyl group covalently per subunit.</text>
</comment>
<comment type="pathway">
    <text evidence="1">Phospholipid metabolism; phosphatidylethanolamine biosynthesis; phosphatidylethanolamine from CDP-diacylglycerol: step 2/2.</text>
</comment>
<comment type="subunit">
    <text evidence="1">Heterodimer of a large membrane-associated beta subunit and a small pyruvoyl-containing alpha subunit.</text>
</comment>
<comment type="subcellular location">
    <subcellularLocation>
        <location evidence="1">Cell membrane</location>
        <topology evidence="1">Peripheral membrane protein</topology>
    </subcellularLocation>
</comment>
<comment type="PTM">
    <text evidence="1">Is synthesized initially as an inactive proenzyme. Formation of the active enzyme involves a self-maturation process in which the active site pyruvoyl group is generated from an internal serine residue via an autocatalytic post-translational modification. Two non-identical subunits are generated from the proenzyme in this reaction, and the pyruvate is formed at the N-terminus of the alpha chain, which is derived from the carboxyl end of the proenzyme. The autoendoproteolytic cleavage occurs by a canonical serine protease mechanism, in which the side chain hydroxyl group of the serine supplies its oxygen atom to form the C-terminus of the beta chain, while the remainder of the serine residue undergoes an oxidative deamination to produce ammonia and the pyruvoyl prosthetic group on the alpha chain. During this reaction, the Ser that is part of the protease active site of the proenzyme becomes the pyruvoyl prosthetic group, which constitutes an essential element of the active site of the mature decarboxylase.</text>
</comment>
<comment type="similarity">
    <text evidence="1">Belongs to the phosphatidylserine decarboxylase family. PSD-B subfamily. Prokaryotic type I sub-subfamily.</text>
</comment>
<sequence length="287" mass="31403">MDKVKIALQYIMPKHLLSRLVGKLAAAEMGSVTTAAINWFIKQYKIDMSEAAEPEATAYSCFNDFFTRALKPGIRPLCDDNDYIVHPVDGAVSQLGPIKEGRIFQAKGHDYSSLALLGDQADDAKRFEGGDFATIYLAPKDYHRIHMPIKGTLSKMTYVPGELFSVNPLTAENVPGLFARNERVVAIFETEIGPMAMVLVGATIVASIETVWAGTVTPPTGKKVFTWDYPTEGPNALTLEKGAEMGRFKLGSTVVMLFAKDALDEFADGVEPRSVTRMGQAFAKIED</sequence>
<protein>
    <recommendedName>
        <fullName evidence="1">Phosphatidylserine decarboxylase proenzyme</fullName>
        <ecNumber evidence="1">4.1.1.65</ecNumber>
    </recommendedName>
    <component>
        <recommendedName>
            <fullName evidence="1">Phosphatidylserine decarboxylase alpha chain</fullName>
        </recommendedName>
    </component>
    <component>
        <recommendedName>
            <fullName evidence="1">Phosphatidylserine decarboxylase beta chain</fullName>
        </recommendedName>
    </component>
</protein>
<gene>
    <name evidence="1" type="primary">psd</name>
    <name type="ordered locus">Shal_3643</name>
</gene>
<name>PSD_SHEHH</name>